<protein>
    <recommendedName>
        <fullName evidence="6">Membrane steroid-binding protein 2</fullName>
        <shortName evidence="6">OsMSBP2</shortName>
    </recommendedName>
    <alternativeName>
        <fullName evidence="6">OsMSBP1</fullName>
    </alternativeName>
</protein>
<feature type="chain" id="PRO_0000441260" description="Membrane steroid-binding protein 2" evidence="3">
    <location>
        <begin position="1"/>
        <end position="265"/>
    </location>
</feature>
<feature type="transmembrane region" description="Helical" evidence="3">
    <location>
        <begin position="63"/>
        <end position="85"/>
    </location>
</feature>
<feature type="domain" description="Cytochrome b5 heme-binding" evidence="4">
    <location>
        <begin position="118"/>
        <end position="217"/>
    </location>
</feature>
<feature type="region of interest" description="Disordered" evidence="5">
    <location>
        <begin position="94"/>
        <end position="116"/>
    </location>
</feature>
<feature type="region of interest" description="Steroid-binding" evidence="1">
    <location>
        <begin position="120"/>
        <end position="217"/>
    </location>
</feature>
<sequence>MATCSAACARPAVVVFASPAAARRRAASSVYLPGRPLRGGGVVRCSAGPVSGGMISKKVAELWAAARSASPVAVIAAVAGAAVVYKVGSSLLAPPPPPARPREEPSEEAPPPPEPVQVGEITAEELLQYDGSDPEKPLLMAIKGQIYDVSQSRLFYGPGGPYALFAGKDASRALAKMSFEPQDLTDDISGLSLLELSALQDWEYKFSSKYVKVGTIKKVLVEQGGDSTADAIEEAAVDGEDSILTAKMSNQLLYEEEMEVGSDDP</sequence>
<organism>
    <name type="scientific">Oryza sativa subsp. japonica</name>
    <name type="common">Rice</name>
    <dbReference type="NCBI Taxonomy" id="39947"/>
    <lineage>
        <taxon>Eukaryota</taxon>
        <taxon>Viridiplantae</taxon>
        <taxon>Streptophyta</taxon>
        <taxon>Embryophyta</taxon>
        <taxon>Tracheophyta</taxon>
        <taxon>Spermatophyta</taxon>
        <taxon>Magnoliopsida</taxon>
        <taxon>Liliopsida</taxon>
        <taxon>Poales</taxon>
        <taxon>Poaceae</taxon>
        <taxon>BOP clade</taxon>
        <taxon>Oryzoideae</taxon>
        <taxon>Oryzeae</taxon>
        <taxon>Oryzinae</taxon>
        <taxon>Oryza</taxon>
        <taxon>Oryza sativa</taxon>
    </lineage>
</organism>
<gene>
    <name evidence="6" type="primary">MSBP2</name>
    <name evidence="9" type="ordered locus">Os10g0502500</name>
    <name evidence="8" type="ordered locus">LOC_Os10g35850</name>
    <name evidence="10" type="ORF">OsJ_32070</name>
    <name evidence="7" type="ORF">OSJNBb0073N24.2</name>
</gene>
<keyword id="KW-1003">Cell membrane</keyword>
<keyword id="KW-0446">Lipid-binding</keyword>
<keyword id="KW-0472">Membrane</keyword>
<keyword id="KW-1185">Reference proteome</keyword>
<keyword id="KW-0735">Signal-anchor</keyword>
<keyword id="KW-0754">Steroid-binding</keyword>
<keyword id="KW-0812">Transmembrane</keyword>
<keyword id="KW-1133">Transmembrane helix</keyword>
<evidence type="ECO:0000250" key="1"/>
<evidence type="ECO:0000250" key="2">
    <source>
        <dbReference type="UniProtKB" id="Q9XFM6"/>
    </source>
</evidence>
<evidence type="ECO:0000255" key="3"/>
<evidence type="ECO:0000255" key="4">
    <source>
        <dbReference type="PROSITE-ProRule" id="PRU00279"/>
    </source>
</evidence>
<evidence type="ECO:0000256" key="5">
    <source>
        <dbReference type="SAM" id="MobiDB-lite"/>
    </source>
</evidence>
<evidence type="ECO:0000305" key="6"/>
<evidence type="ECO:0000312" key="7">
    <source>
        <dbReference type="EMBL" id="AAG13623.1"/>
    </source>
</evidence>
<evidence type="ECO:0000312" key="8">
    <source>
        <dbReference type="EMBL" id="AAP54486.1"/>
    </source>
</evidence>
<evidence type="ECO:0000312" key="9">
    <source>
        <dbReference type="EMBL" id="BAF26906.1"/>
    </source>
</evidence>
<evidence type="ECO:0000312" key="10">
    <source>
        <dbReference type="EMBL" id="EEE51227.1"/>
    </source>
</evidence>
<proteinExistence type="evidence at transcript level"/>
<name>MSBP2_ORYSJ</name>
<comment type="function">
    <text evidence="2">Binds multiple steroid compounds.</text>
</comment>
<comment type="subcellular location">
    <subcellularLocation>
        <location evidence="6">Cell membrane</location>
        <topology evidence="6">Single-pass type II membrane protein</topology>
    </subcellularLocation>
</comment>
<comment type="domain">
    <text evidence="6">The cytochrome b5 heme-binding domain lacks the conserved iron-binding His residues at positions 155 and 179.</text>
</comment>
<comment type="similarity">
    <text evidence="6">Belongs to the cytochrome b5 family. MAPR subfamily.</text>
</comment>
<dbReference type="EMBL" id="AC078840">
    <property type="protein sequence ID" value="AAG13623.1"/>
    <property type="molecule type" value="Genomic_DNA"/>
</dbReference>
<dbReference type="EMBL" id="DP000086">
    <property type="protein sequence ID" value="AAP54486.1"/>
    <property type="molecule type" value="Genomic_DNA"/>
</dbReference>
<dbReference type="EMBL" id="AP008216">
    <property type="protein sequence ID" value="BAF26906.1"/>
    <property type="molecule type" value="Genomic_DNA"/>
</dbReference>
<dbReference type="EMBL" id="AP014966">
    <property type="protein sequence ID" value="BAT11540.1"/>
    <property type="molecule type" value="Genomic_DNA"/>
</dbReference>
<dbReference type="EMBL" id="CM000147">
    <property type="protein sequence ID" value="EEE51227.1"/>
    <property type="molecule type" value="Genomic_DNA"/>
</dbReference>
<dbReference type="EMBL" id="AK060167">
    <property type="protein sequence ID" value="BAG87359.1"/>
    <property type="molecule type" value="mRNA"/>
</dbReference>
<dbReference type="EMBL" id="AK061824">
    <property type="protein sequence ID" value="BAG88131.1"/>
    <property type="molecule type" value="mRNA"/>
</dbReference>
<dbReference type="EMBL" id="AK098881">
    <property type="protein sequence ID" value="BAG93790.1"/>
    <property type="molecule type" value="mRNA"/>
</dbReference>
<dbReference type="SMR" id="Q9FVZ9"/>
<dbReference type="FunCoup" id="Q9FVZ9">
    <property type="interactions" value="679"/>
</dbReference>
<dbReference type="STRING" id="39947.Q9FVZ9"/>
<dbReference type="PaxDb" id="39947-Q9FVZ9"/>
<dbReference type="EnsemblPlants" id="Os10t0502500-04">
    <property type="protein sequence ID" value="Os10t0502500-04"/>
    <property type="gene ID" value="Os10g0502500"/>
</dbReference>
<dbReference type="Gramene" id="Os10t0502500-04">
    <property type="protein sequence ID" value="Os10t0502500-04"/>
    <property type="gene ID" value="Os10g0502500"/>
</dbReference>
<dbReference type="KEGG" id="dosa:Os10g0502500"/>
<dbReference type="KEGG" id="osa:4349045"/>
<dbReference type="eggNOG" id="KOG1110">
    <property type="taxonomic scope" value="Eukaryota"/>
</dbReference>
<dbReference type="HOGENOM" id="CLU_042860_0_2_1"/>
<dbReference type="InParanoid" id="Q9FVZ9"/>
<dbReference type="OMA" id="REEVMPM"/>
<dbReference type="OrthoDB" id="547796at2759"/>
<dbReference type="Proteomes" id="UP000000763">
    <property type="component" value="Chromosome 10"/>
</dbReference>
<dbReference type="Proteomes" id="UP000007752">
    <property type="component" value="Chromosome 10"/>
</dbReference>
<dbReference type="Proteomes" id="UP000059680">
    <property type="component" value="Chromosome 10"/>
</dbReference>
<dbReference type="GO" id="GO:0012505">
    <property type="term" value="C:endomembrane system"/>
    <property type="evidence" value="ECO:0000318"/>
    <property type="project" value="GO_Central"/>
</dbReference>
<dbReference type="GO" id="GO:0005783">
    <property type="term" value="C:endoplasmic reticulum"/>
    <property type="evidence" value="ECO:0000318"/>
    <property type="project" value="GO_Central"/>
</dbReference>
<dbReference type="GO" id="GO:0016020">
    <property type="term" value="C:membrane"/>
    <property type="evidence" value="ECO:0000318"/>
    <property type="project" value="GO_Central"/>
</dbReference>
<dbReference type="GO" id="GO:0005886">
    <property type="term" value="C:plasma membrane"/>
    <property type="evidence" value="ECO:0007669"/>
    <property type="project" value="UniProtKB-SubCell"/>
</dbReference>
<dbReference type="GO" id="GO:0005496">
    <property type="term" value="F:steroid binding"/>
    <property type="evidence" value="ECO:0007669"/>
    <property type="project" value="UniProtKB-KW"/>
</dbReference>
<dbReference type="FunFam" id="3.10.120.10:FF:000006">
    <property type="entry name" value="Membrane steroid-binding protein 1"/>
    <property type="match status" value="1"/>
</dbReference>
<dbReference type="Gene3D" id="3.10.120.10">
    <property type="entry name" value="Cytochrome b5-like heme/steroid binding domain"/>
    <property type="match status" value="1"/>
</dbReference>
<dbReference type="InterPro" id="IPR001199">
    <property type="entry name" value="Cyt_B5-like_heme/steroid-bd"/>
</dbReference>
<dbReference type="InterPro" id="IPR036400">
    <property type="entry name" value="Cyt_B5-like_heme/steroid_sf"/>
</dbReference>
<dbReference type="InterPro" id="IPR050577">
    <property type="entry name" value="MAPR/NEUFC/NENF-like"/>
</dbReference>
<dbReference type="PANTHER" id="PTHR10281:SF113">
    <property type="entry name" value="MEMBRANE STEROID-BINDING PROTEIN 2"/>
    <property type="match status" value="1"/>
</dbReference>
<dbReference type="PANTHER" id="PTHR10281">
    <property type="entry name" value="MEMBRANE-ASSOCIATED PROGESTERONE RECEPTOR COMPONENT-RELATED"/>
    <property type="match status" value="1"/>
</dbReference>
<dbReference type="Pfam" id="PF00173">
    <property type="entry name" value="Cyt-b5"/>
    <property type="match status" value="1"/>
</dbReference>
<dbReference type="SMART" id="SM01117">
    <property type="entry name" value="Cyt-b5"/>
    <property type="match status" value="1"/>
</dbReference>
<dbReference type="SUPFAM" id="SSF55856">
    <property type="entry name" value="Cytochrome b5-like heme/steroid binding domain"/>
    <property type="match status" value="1"/>
</dbReference>
<reference key="1">
    <citation type="journal article" date="2003" name="Science">
        <title>In-depth view of structure, activity, and evolution of rice chromosome 10.</title>
        <authorList>
            <person name="Yu Y."/>
            <person name="Rambo T."/>
            <person name="Currie J."/>
            <person name="Saski C."/>
            <person name="Kim H.-R."/>
            <person name="Collura K."/>
            <person name="Thompson S."/>
            <person name="Simmons J."/>
            <person name="Yang T.-J."/>
            <person name="Nah G."/>
            <person name="Patel A.J."/>
            <person name="Thurmond S."/>
            <person name="Henry D."/>
            <person name="Oates R."/>
            <person name="Palmer M."/>
            <person name="Pries G."/>
            <person name="Gibson J."/>
            <person name="Anderson H."/>
            <person name="Paradkar M."/>
            <person name="Crane L."/>
            <person name="Dale J."/>
            <person name="Carver M.B."/>
            <person name="Wood T."/>
            <person name="Frisch D."/>
            <person name="Engler F."/>
            <person name="Soderlund C."/>
            <person name="Palmer L.E."/>
            <person name="Teytelman L."/>
            <person name="Nascimento L."/>
            <person name="De la Bastide M."/>
            <person name="Spiegel L."/>
            <person name="Ware D."/>
            <person name="O'Shaughnessy A."/>
            <person name="Dike S."/>
            <person name="Dedhia N."/>
            <person name="Preston R."/>
            <person name="Huang E."/>
            <person name="Ferraro K."/>
            <person name="Kuit K."/>
            <person name="Miller B."/>
            <person name="Zutavern T."/>
            <person name="Katzenberger F."/>
            <person name="Muller S."/>
            <person name="Balija V."/>
            <person name="Martienssen R.A."/>
            <person name="Stein L."/>
            <person name="Minx P."/>
            <person name="Johnson D."/>
            <person name="Cordum H."/>
            <person name="Mardis E."/>
            <person name="Cheng Z."/>
            <person name="Jiang J."/>
            <person name="Wilson R."/>
            <person name="McCombie W.R."/>
            <person name="Wing R.A."/>
            <person name="Yuan Q."/>
            <person name="Ouyang S."/>
            <person name="Liu J."/>
            <person name="Jones K.M."/>
            <person name="Gansberger K."/>
            <person name="Moffat K."/>
            <person name="Hill J."/>
            <person name="Tsitrin T."/>
            <person name="Overton L."/>
            <person name="Bera J."/>
            <person name="Kim M."/>
            <person name="Jin S."/>
            <person name="Tallon L."/>
            <person name="Ciecko A."/>
            <person name="Pai G."/>
            <person name="Van Aken S."/>
            <person name="Utterback T."/>
            <person name="Reidmuller S."/>
            <person name="Bormann J."/>
            <person name="Feldblyum T."/>
            <person name="Hsiao J."/>
            <person name="Zismann V."/>
            <person name="Blunt S."/>
            <person name="de Vazeille A.R."/>
            <person name="Shaffer T."/>
            <person name="Koo H."/>
            <person name="Suh B."/>
            <person name="Yang Q."/>
            <person name="Haas B."/>
            <person name="Peterson J."/>
            <person name="Pertea M."/>
            <person name="Volfovsky N."/>
            <person name="Wortman J."/>
            <person name="White O."/>
            <person name="Salzberg S.L."/>
            <person name="Fraser C.M."/>
            <person name="Buell C.R."/>
            <person name="Messing J."/>
            <person name="Song R."/>
            <person name="Fuks G."/>
            <person name="Llaca V."/>
            <person name="Kovchak S."/>
            <person name="Young S."/>
            <person name="Bowers J.E."/>
            <person name="Paterson A.H."/>
            <person name="Johns M.A."/>
            <person name="Mao L."/>
            <person name="Pan H."/>
            <person name="Dean R.A."/>
        </authorList>
    </citation>
    <scope>NUCLEOTIDE SEQUENCE [LARGE SCALE GENOMIC DNA]</scope>
    <source>
        <strain>cv. Nipponbare</strain>
    </source>
</reference>
<reference key="2">
    <citation type="journal article" date="2005" name="Nature">
        <title>The map-based sequence of the rice genome.</title>
        <authorList>
            <consortium name="International rice genome sequencing project (IRGSP)"/>
        </authorList>
    </citation>
    <scope>NUCLEOTIDE SEQUENCE [LARGE SCALE GENOMIC DNA]</scope>
    <source>
        <strain>cv. Nipponbare</strain>
    </source>
</reference>
<reference key="3">
    <citation type="journal article" date="2008" name="Nucleic Acids Res.">
        <title>The rice annotation project database (RAP-DB): 2008 update.</title>
        <authorList>
            <consortium name="The rice annotation project (RAP)"/>
        </authorList>
    </citation>
    <scope>GENOME REANNOTATION</scope>
    <source>
        <strain>cv. Nipponbare</strain>
    </source>
</reference>
<reference key="4">
    <citation type="journal article" date="2013" name="Rice">
        <title>Improvement of the Oryza sativa Nipponbare reference genome using next generation sequence and optical map data.</title>
        <authorList>
            <person name="Kawahara Y."/>
            <person name="de la Bastide M."/>
            <person name="Hamilton J.P."/>
            <person name="Kanamori H."/>
            <person name="McCombie W.R."/>
            <person name="Ouyang S."/>
            <person name="Schwartz D.C."/>
            <person name="Tanaka T."/>
            <person name="Wu J."/>
            <person name="Zhou S."/>
            <person name="Childs K.L."/>
            <person name="Davidson R.M."/>
            <person name="Lin H."/>
            <person name="Quesada-Ocampo L."/>
            <person name="Vaillancourt B."/>
            <person name="Sakai H."/>
            <person name="Lee S.S."/>
            <person name="Kim J."/>
            <person name="Numa H."/>
            <person name="Itoh T."/>
            <person name="Buell C.R."/>
            <person name="Matsumoto T."/>
        </authorList>
    </citation>
    <scope>GENOME REANNOTATION</scope>
    <source>
        <strain>cv. Nipponbare</strain>
    </source>
</reference>
<reference key="5">
    <citation type="journal article" date="2005" name="PLoS Biol.">
        <title>The genomes of Oryza sativa: a history of duplications.</title>
        <authorList>
            <person name="Yu J."/>
            <person name="Wang J."/>
            <person name="Lin W."/>
            <person name="Li S."/>
            <person name="Li H."/>
            <person name="Zhou J."/>
            <person name="Ni P."/>
            <person name="Dong W."/>
            <person name="Hu S."/>
            <person name="Zeng C."/>
            <person name="Zhang J."/>
            <person name="Zhang Y."/>
            <person name="Li R."/>
            <person name="Xu Z."/>
            <person name="Li S."/>
            <person name="Li X."/>
            <person name="Zheng H."/>
            <person name="Cong L."/>
            <person name="Lin L."/>
            <person name="Yin J."/>
            <person name="Geng J."/>
            <person name="Li G."/>
            <person name="Shi J."/>
            <person name="Liu J."/>
            <person name="Lv H."/>
            <person name="Li J."/>
            <person name="Wang J."/>
            <person name="Deng Y."/>
            <person name="Ran L."/>
            <person name="Shi X."/>
            <person name="Wang X."/>
            <person name="Wu Q."/>
            <person name="Li C."/>
            <person name="Ren X."/>
            <person name="Wang J."/>
            <person name="Wang X."/>
            <person name="Li D."/>
            <person name="Liu D."/>
            <person name="Zhang X."/>
            <person name="Ji Z."/>
            <person name="Zhao W."/>
            <person name="Sun Y."/>
            <person name="Zhang Z."/>
            <person name="Bao J."/>
            <person name="Han Y."/>
            <person name="Dong L."/>
            <person name="Ji J."/>
            <person name="Chen P."/>
            <person name="Wu S."/>
            <person name="Liu J."/>
            <person name="Xiao Y."/>
            <person name="Bu D."/>
            <person name="Tan J."/>
            <person name="Yang L."/>
            <person name="Ye C."/>
            <person name="Zhang J."/>
            <person name="Xu J."/>
            <person name="Zhou Y."/>
            <person name="Yu Y."/>
            <person name="Zhang B."/>
            <person name="Zhuang S."/>
            <person name="Wei H."/>
            <person name="Liu B."/>
            <person name="Lei M."/>
            <person name="Yu H."/>
            <person name="Li Y."/>
            <person name="Xu H."/>
            <person name="Wei S."/>
            <person name="He X."/>
            <person name="Fang L."/>
            <person name="Zhang Z."/>
            <person name="Zhang Y."/>
            <person name="Huang X."/>
            <person name="Su Z."/>
            <person name="Tong W."/>
            <person name="Li J."/>
            <person name="Tong Z."/>
            <person name="Li S."/>
            <person name="Ye J."/>
            <person name="Wang L."/>
            <person name="Fang L."/>
            <person name="Lei T."/>
            <person name="Chen C.-S."/>
            <person name="Chen H.-C."/>
            <person name="Xu Z."/>
            <person name="Li H."/>
            <person name="Huang H."/>
            <person name="Zhang F."/>
            <person name="Xu H."/>
            <person name="Li N."/>
            <person name="Zhao C."/>
            <person name="Li S."/>
            <person name="Dong L."/>
            <person name="Huang Y."/>
            <person name="Li L."/>
            <person name="Xi Y."/>
            <person name="Qi Q."/>
            <person name="Li W."/>
            <person name="Zhang B."/>
            <person name="Hu W."/>
            <person name="Zhang Y."/>
            <person name="Tian X."/>
            <person name="Jiao Y."/>
            <person name="Liang X."/>
            <person name="Jin J."/>
            <person name="Gao L."/>
            <person name="Zheng W."/>
            <person name="Hao B."/>
            <person name="Liu S.-M."/>
            <person name="Wang W."/>
            <person name="Yuan L."/>
            <person name="Cao M."/>
            <person name="McDermott J."/>
            <person name="Samudrala R."/>
            <person name="Wang J."/>
            <person name="Wong G.K.-S."/>
            <person name="Yang H."/>
        </authorList>
    </citation>
    <scope>NUCLEOTIDE SEQUENCE [LARGE SCALE GENOMIC DNA]</scope>
    <source>
        <strain>cv. Nipponbare</strain>
    </source>
</reference>
<reference key="6">
    <citation type="journal article" date="2003" name="Science">
        <title>Collection, mapping, and annotation of over 28,000 cDNA clones from japonica rice.</title>
        <authorList>
            <consortium name="The rice full-length cDNA consortium"/>
        </authorList>
    </citation>
    <scope>NUCLEOTIDE SEQUENCE [LARGE SCALE MRNA]</scope>
    <source>
        <strain>cv. Nipponbare</strain>
    </source>
</reference>
<accession>Q9FVZ9</accession>
<accession>Q7XD11</accession>